<accession>C0R5M6</accession>
<gene>
    <name evidence="1" type="primary">gatA</name>
    <name type="ordered locus">WRi_002430</name>
</gene>
<organism>
    <name type="scientific">Wolbachia sp. subsp. Drosophila simulans (strain wRi)</name>
    <dbReference type="NCBI Taxonomy" id="66084"/>
    <lineage>
        <taxon>Bacteria</taxon>
        <taxon>Pseudomonadati</taxon>
        <taxon>Pseudomonadota</taxon>
        <taxon>Alphaproteobacteria</taxon>
        <taxon>Rickettsiales</taxon>
        <taxon>Anaplasmataceae</taxon>
        <taxon>Wolbachieae</taxon>
        <taxon>Wolbachia</taxon>
    </lineage>
</organism>
<protein>
    <recommendedName>
        <fullName evidence="1">Glutamyl-tRNA(Gln) amidotransferase subunit A</fullName>
        <shortName evidence="1">Glu-ADT subunit A</shortName>
        <ecNumber evidence="1">6.3.5.7</ecNumber>
    </recommendedName>
</protein>
<sequence length="489" mass="52766">MNELRKLSITQMHDGLKKKSFSAVELVEAHISAVENEKLNAFITKTPEIAMKAAKAADEHFSRQKDDLISPLMGVPVGIKDLFCTKGIKTTACSKMLENFVPTYESTVSDLLLKSGAAMLGKLNMDEFAMGSANTNSYFGPVENVWIRKSDGEKVVPGGSSGGSAASVAGFLCAGALGSDTGGSVRQPAAYCGVVGIKPTYGRCSRFGMIAFASSLDQAGVITRSVSDSALMLEAICGYDTKDSISSEKPVPKLSSFINGDVKGKCIGIPKEYRMDGISEEIVHNWERVASYLKENGAEVVDITLPHTKYAIPVYYLICSAETSSNLARYDGVRYGLRVDADTLEEMYSLTRAEGFGKEVKRRILIGAYALSSGHYNEYYEKAQCIRALIRNDFIKAFEKIDYILVPSAPTEAFGLNEKPDPLIMCINDVFTVPASLAGLPAISVPVGLSNEGLPLALQVIGNYYDEAGILNVASVIEQNCGRIIRPLA</sequence>
<evidence type="ECO:0000255" key="1">
    <source>
        <dbReference type="HAMAP-Rule" id="MF_00120"/>
    </source>
</evidence>
<reference key="1">
    <citation type="journal article" date="2009" name="Proc. Natl. Acad. Sci. U.S.A.">
        <title>The mosaic genome structure of the Wolbachia wRi strain infecting Drosophila simulans.</title>
        <authorList>
            <person name="Klasson L."/>
            <person name="Westberg J."/>
            <person name="Sapountzis P."/>
            <person name="Naeslund K."/>
            <person name="Lutnaes Y."/>
            <person name="Darby A.C."/>
            <person name="Veneti Z."/>
            <person name="Chen L."/>
            <person name="Braig H.R."/>
            <person name="Garrett R."/>
            <person name="Bourtzis K."/>
            <person name="Andersson S.G."/>
        </authorList>
    </citation>
    <scope>NUCLEOTIDE SEQUENCE [LARGE SCALE GENOMIC DNA]</scope>
    <source>
        <strain>wRi</strain>
    </source>
</reference>
<keyword id="KW-0067">ATP-binding</keyword>
<keyword id="KW-0436">Ligase</keyword>
<keyword id="KW-0547">Nucleotide-binding</keyword>
<keyword id="KW-0648">Protein biosynthesis</keyword>
<dbReference type="EC" id="6.3.5.7" evidence="1"/>
<dbReference type="EMBL" id="CP001391">
    <property type="protein sequence ID" value="ACN95068.1"/>
    <property type="molecule type" value="Genomic_DNA"/>
</dbReference>
<dbReference type="RefSeq" id="WP_012673103.1">
    <property type="nucleotide sequence ID" value="NZ_MKIF01000145.1"/>
</dbReference>
<dbReference type="SMR" id="C0R5M6"/>
<dbReference type="STRING" id="66084.WRi_002430"/>
<dbReference type="KEGG" id="wri:WRi_002430"/>
<dbReference type="HOGENOM" id="CLU_009600_0_3_5"/>
<dbReference type="Proteomes" id="UP000001293">
    <property type="component" value="Chromosome"/>
</dbReference>
<dbReference type="GO" id="GO:0030956">
    <property type="term" value="C:glutamyl-tRNA(Gln) amidotransferase complex"/>
    <property type="evidence" value="ECO:0007669"/>
    <property type="project" value="InterPro"/>
</dbReference>
<dbReference type="GO" id="GO:0005524">
    <property type="term" value="F:ATP binding"/>
    <property type="evidence" value="ECO:0007669"/>
    <property type="project" value="UniProtKB-KW"/>
</dbReference>
<dbReference type="GO" id="GO:0050567">
    <property type="term" value="F:glutaminyl-tRNA synthase (glutamine-hydrolyzing) activity"/>
    <property type="evidence" value="ECO:0007669"/>
    <property type="project" value="UniProtKB-UniRule"/>
</dbReference>
<dbReference type="GO" id="GO:0006412">
    <property type="term" value="P:translation"/>
    <property type="evidence" value="ECO:0007669"/>
    <property type="project" value="UniProtKB-UniRule"/>
</dbReference>
<dbReference type="Gene3D" id="3.90.1300.10">
    <property type="entry name" value="Amidase signature (AS) domain"/>
    <property type="match status" value="1"/>
</dbReference>
<dbReference type="HAMAP" id="MF_00120">
    <property type="entry name" value="GatA"/>
    <property type="match status" value="1"/>
</dbReference>
<dbReference type="InterPro" id="IPR000120">
    <property type="entry name" value="Amidase"/>
</dbReference>
<dbReference type="InterPro" id="IPR020556">
    <property type="entry name" value="Amidase_CS"/>
</dbReference>
<dbReference type="InterPro" id="IPR023631">
    <property type="entry name" value="Amidase_dom"/>
</dbReference>
<dbReference type="InterPro" id="IPR036928">
    <property type="entry name" value="AS_sf"/>
</dbReference>
<dbReference type="InterPro" id="IPR004412">
    <property type="entry name" value="GatA"/>
</dbReference>
<dbReference type="NCBIfam" id="TIGR00132">
    <property type="entry name" value="gatA"/>
    <property type="match status" value="1"/>
</dbReference>
<dbReference type="PANTHER" id="PTHR11895:SF151">
    <property type="entry name" value="GLUTAMYL-TRNA(GLN) AMIDOTRANSFERASE SUBUNIT A"/>
    <property type="match status" value="1"/>
</dbReference>
<dbReference type="PANTHER" id="PTHR11895">
    <property type="entry name" value="TRANSAMIDASE"/>
    <property type="match status" value="1"/>
</dbReference>
<dbReference type="Pfam" id="PF01425">
    <property type="entry name" value="Amidase"/>
    <property type="match status" value="1"/>
</dbReference>
<dbReference type="SUPFAM" id="SSF75304">
    <property type="entry name" value="Amidase signature (AS) enzymes"/>
    <property type="match status" value="1"/>
</dbReference>
<dbReference type="PROSITE" id="PS00571">
    <property type="entry name" value="AMIDASES"/>
    <property type="match status" value="1"/>
</dbReference>
<proteinExistence type="inferred from homology"/>
<feature type="chain" id="PRO_1000122499" description="Glutamyl-tRNA(Gln) amidotransferase subunit A">
    <location>
        <begin position="1"/>
        <end position="489"/>
    </location>
</feature>
<feature type="active site" description="Charge relay system" evidence="1">
    <location>
        <position position="80"/>
    </location>
</feature>
<feature type="active site" description="Charge relay system" evidence="1">
    <location>
        <position position="160"/>
    </location>
</feature>
<feature type="active site" description="Acyl-ester intermediate" evidence="1">
    <location>
        <position position="184"/>
    </location>
</feature>
<name>GATA_WOLWR</name>
<comment type="function">
    <text evidence="1">Allows the formation of correctly charged Gln-tRNA(Gln) through the transamidation of misacylated Glu-tRNA(Gln) in organisms which lack glutaminyl-tRNA synthetase. The reaction takes place in the presence of glutamine and ATP through an activated gamma-phospho-Glu-tRNA(Gln).</text>
</comment>
<comment type="catalytic activity">
    <reaction evidence="1">
        <text>L-glutamyl-tRNA(Gln) + L-glutamine + ATP + H2O = L-glutaminyl-tRNA(Gln) + L-glutamate + ADP + phosphate + H(+)</text>
        <dbReference type="Rhea" id="RHEA:17521"/>
        <dbReference type="Rhea" id="RHEA-COMP:9681"/>
        <dbReference type="Rhea" id="RHEA-COMP:9684"/>
        <dbReference type="ChEBI" id="CHEBI:15377"/>
        <dbReference type="ChEBI" id="CHEBI:15378"/>
        <dbReference type="ChEBI" id="CHEBI:29985"/>
        <dbReference type="ChEBI" id="CHEBI:30616"/>
        <dbReference type="ChEBI" id="CHEBI:43474"/>
        <dbReference type="ChEBI" id="CHEBI:58359"/>
        <dbReference type="ChEBI" id="CHEBI:78520"/>
        <dbReference type="ChEBI" id="CHEBI:78521"/>
        <dbReference type="ChEBI" id="CHEBI:456216"/>
        <dbReference type="EC" id="6.3.5.7"/>
    </reaction>
</comment>
<comment type="subunit">
    <text evidence="1">Heterotrimer of A, B and C subunits.</text>
</comment>
<comment type="similarity">
    <text evidence="1">Belongs to the amidase family. GatA subfamily.</text>
</comment>